<protein>
    <recommendedName>
        <fullName evidence="1">Large ribosomal subunit protein uL14</fullName>
    </recommendedName>
    <alternativeName>
        <fullName evidence="2">50S ribosomal protein L14</fullName>
    </alternativeName>
</protein>
<name>RL14_STRSY</name>
<gene>
    <name evidence="1" type="primary">rplN</name>
    <name type="ordered locus">SSU05_0081</name>
</gene>
<dbReference type="EMBL" id="CP000407">
    <property type="protein sequence ID" value="ABP89053.1"/>
    <property type="molecule type" value="Genomic_DNA"/>
</dbReference>
<dbReference type="SMR" id="A4VSG4"/>
<dbReference type="STRING" id="391295.SSU05_0081"/>
<dbReference type="KEGG" id="ssu:SSU05_0081"/>
<dbReference type="eggNOG" id="COG0093">
    <property type="taxonomic scope" value="Bacteria"/>
</dbReference>
<dbReference type="HOGENOM" id="CLU_095071_2_1_9"/>
<dbReference type="GO" id="GO:0022625">
    <property type="term" value="C:cytosolic large ribosomal subunit"/>
    <property type="evidence" value="ECO:0007669"/>
    <property type="project" value="TreeGrafter"/>
</dbReference>
<dbReference type="GO" id="GO:0070180">
    <property type="term" value="F:large ribosomal subunit rRNA binding"/>
    <property type="evidence" value="ECO:0007669"/>
    <property type="project" value="TreeGrafter"/>
</dbReference>
<dbReference type="GO" id="GO:0003735">
    <property type="term" value="F:structural constituent of ribosome"/>
    <property type="evidence" value="ECO:0007669"/>
    <property type="project" value="InterPro"/>
</dbReference>
<dbReference type="GO" id="GO:0006412">
    <property type="term" value="P:translation"/>
    <property type="evidence" value="ECO:0007669"/>
    <property type="project" value="UniProtKB-UniRule"/>
</dbReference>
<dbReference type="CDD" id="cd00337">
    <property type="entry name" value="Ribosomal_uL14"/>
    <property type="match status" value="1"/>
</dbReference>
<dbReference type="FunFam" id="2.40.150.20:FF:000001">
    <property type="entry name" value="50S ribosomal protein L14"/>
    <property type="match status" value="1"/>
</dbReference>
<dbReference type="Gene3D" id="2.40.150.20">
    <property type="entry name" value="Ribosomal protein L14"/>
    <property type="match status" value="1"/>
</dbReference>
<dbReference type="HAMAP" id="MF_01367">
    <property type="entry name" value="Ribosomal_uL14"/>
    <property type="match status" value="1"/>
</dbReference>
<dbReference type="InterPro" id="IPR000218">
    <property type="entry name" value="Ribosomal_uL14"/>
</dbReference>
<dbReference type="InterPro" id="IPR005745">
    <property type="entry name" value="Ribosomal_uL14_bac-type"/>
</dbReference>
<dbReference type="InterPro" id="IPR019972">
    <property type="entry name" value="Ribosomal_uL14_CS"/>
</dbReference>
<dbReference type="InterPro" id="IPR036853">
    <property type="entry name" value="Ribosomal_uL14_sf"/>
</dbReference>
<dbReference type="NCBIfam" id="TIGR01067">
    <property type="entry name" value="rplN_bact"/>
    <property type="match status" value="1"/>
</dbReference>
<dbReference type="PANTHER" id="PTHR11761">
    <property type="entry name" value="50S/60S RIBOSOMAL PROTEIN L14/L23"/>
    <property type="match status" value="1"/>
</dbReference>
<dbReference type="PANTHER" id="PTHR11761:SF3">
    <property type="entry name" value="LARGE RIBOSOMAL SUBUNIT PROTEIN UL14M"/>
    <property type="match status" value="1"/>
</dbReference>
<dbReference type="Pfam" id="PF00238">
    <property type="entry name" value="Ribosomal_L14"/>
    <property type="match status" value="1"/>
</dbReference>
<dbReference type="SMART" id="SM01374">
    <property type="entry name" value="Ribosomal_L14"/>
    <property type="match status" value="1"/>
</dbReference>
<dbReference type="SUPFAM" id="SSF50193">
    <property type="entry name" value="Ribosomal protein L14"/>
    <property type="match status" value="1"/>
</dbReference>
<dbReference type="PROSITE" id="PS00049">
    <property type="entry name" value="RIBOSOMAL_L14"/>
    <property type="match status" value="1"/>
</dbReference>
<organism>
    <name type="scientific">Streptococcus suis (strain 05ZYH33)</name>
    <dbReference type="NCBI Taxonomy" id="391295"/>
    <lineage>
        <taxon>Bacteria</taxon>
        <taxon>Bacillati</taxon>
        <taxon>Bacillota</taxon>
        <taxon>Bacilli</taxon>
        <taxon>Lactobacillales</taxon>
        <taxon>Streptococcaceae</taxon>
        <taxon>Streptococcus</taxon>
    </lineage>
</organism>
<reference key="1">
    <citation type="journal article" date="2007" name="PLoS ONE">
        <title>A glimpse of streptococcal toxic shock syndrome from comparative genomics of S. suis 2 Chinese isolates.</title>
        <authorList>
            <person name="Chen C."/>
            <person name="Tang J."/>
            <person name="Dong W."/>
            <person name="Wang C."/>
            <person name="Feng Y."/>
            <person name="Wang J."/>
            <person name="Zheng F."/>
            <person name="Pan X."/>
            <person name="Liu D."/>
            <person name="Li M."/>
            <person name="Song Y."/>
            <person name="Zhu X."/>
            <person name="Sun H."/>
            <person name="Feng T."/>
            <person name="Guo Z."/>
            <person name="Ju A."/>
            <person name="Ge J."/>
            <person name="Dong Y."/>
            <person name="Sun W."/>
            <person name="Jiang Y."/>
            <person name="Wang J."/>
            <person name="Yan J."/>
            <person name="Yang H."/>
            <person name="Wang X."/>
            <person name="Gao G.F."/>
            <person name="Yang R."/>
            <person name="Wang J."/>
            <person name="Yu J."/>
        </authorList>
    </citation>
    <scope>NUCLEOTIDE SEQUENCE [LARGE SCALE GENOMIC DNA]</scope>
    <source>
        <strain>05ZYH33</strain>
    </source>
</reference>
<feature type="chain" id="PRO_1000055727" description="Large ribosomal subunit protein uL14">
    <location>
        <begin position="1"/>
        <end position="122"/>
    </location>
</feature>
<sequence>MIQTETRLKVADNSGAREILTIKVLGGSGRKFANIGDIIVASVKQATPGGAVKKGDVVKAVIVRTKTGARRADGSYIKFDENAAVIIREDKNPRGTRIFGPVARELRDGGFMKIVSLAPEVL</sequence>
<keyword id="KW-0687">Ribonucleoprotein</keyword>
<keyword id="KW-0689">Ribosomal protein</keyword>
<keyword id="KW-0694">RNA-binding</keyword>
<keyword id="KW-0699">rRNA-binding</keyword>
<proteinExistence type="inferred from homology"/>
<comment type="function">
    <text evidence="1">Binds to 23S rRNA. Forms part of two intersubunit bridges in the 70S ribosome.</text>
</comment>
<comment type="subunit">
    <text evidence="1">Part of the 50S ribosomal subunit. Forms a cluster with proteins L3 and L19. In the 70S ribosome, L14 and L19 interact and together make contacts with the 16S rRNA in bridges B5 and B8.</text>
</comment>
<comment type="similarity">
    <text evidence="1">Belongs to the universal ribosomal protein uL14 family.</text>
</comment>
<accession>A4VSG4</accession>
<evidence type="ECO:0000255" key="1">
    <source>
        <dbReference type="HAMAP-Rule" id="MF_01367"/>
    </source>
</evidence>
<evidence type="ECO:0000305" key="2"/>